<name>Y2221_ARCFU</name>
<keyword id="KW-1185">Reference proteome</keyword>
<accession>O28062</accession>
<proteinExistence type="predicted"/>
<protein>
    <recommendedName>
        <fullName>Uncharacterized protein AF_2221</fullName>
    </recommendedName>
</protein>
<organism>
    <name type="scientific">Archaeoglobus fulgidus (strain ATCC 49558 / DSM 4304 / JCM 9628 / NBRC 100126 / VC-16)</name>
    <dbReference type="NCBI Taxonomy" id="224325"/>
    <lineage>
        <taxon>Archaea</taxon>
        <taxon>Methanobacteriati</taxon>
        <taxon>Methanobacteriota</taxon>
        <taxon>Archaeoglobi</taxon>
        <taxon>Archaeoglobales</taxon>
        <taxon>Archaeoglobaceae</taxon>
        <taxon>Archaeoglobus</taxon>
    </lineage>
</organism>
<feature type="chain" id="PRO_0000128123" description="Uncharacterized protein AF_2221">
    <location>
        <begin position="1"/>
        <end position="340"/>
    </location>
</feature>
<sequence length="340" mass="39468">MLASDSKLIRIRNFEACLGVVLEIKEPVGFKRRYLNFIEEIKSAYQISSPRNVFKSYELKRKLGLQDFEDVAQNFVNIVIADSCRIHIVFASFNTKKVEKVIYYRKDRRKRQQEKKTIEFLRHLSSYFPYVAAWSAIFNDEAISFDNIEIHLDSFDGEVTYAWEILKNNISAKIKTFPKGDQCNPFISASDIVLSLVEINLLKGDFRLDVQELKKLLEKYNIKGSITHCGTNKIKYITPISSQKIPEALDYAEPVIYVVPGQIKKEWIENSPKFEYVLKYAQFVEGGVKFLNIDRDYEFIRDTDVLAYFDDAGKVLAKNISSLYDVECKSISEIINETKY</sequence>
<dbReference type="EMBL" id="AE000782">
    <property type="protein sequence ID" value="AAB89041.1"/>
    <property type="molecule type" value="Genomic_DNA"/>
</dbReference>
<dbReference type="PIR" id="E69527">
    <property type="entry name" value="E69527"/>
</dbReference>
<dbReference type="RefSeq" id="WP_010879710.1">
    <property type="nucleotide sequence ID" value="NC_000917.1"/>
</dbReference>
<dbReference type="STRING" id="224325.AF_2221"/>
<dbReference type="PaxDb" id="224325-AF_2221"/>
<dbReference type="EnsemblBacteria" id="AAB89041">
    <property type="protein sequence ID" value="AAB89041"/>
    <property type="gene ID" value="AF_2221"/>
</dbReference>
<dbReference type="KEGG" id="afu:AF_2221"/>
<dbReference type="eggNOG" id="arCOG04485">
    <property type="taxonomic scope" value="Archaea"/>
</dbReference>
<dbReference type="HOGENOM" id="CLU_062370_0_0_2"/>
<dbReference type="OrthoDB" id="97038at2157"/>
<dbReference type="Proteomes" id="UP000002199">
    <property type="component" value="Chromosome"/>
</dbReference>
<gene>
    <name type="ordered locus">AF_2221</name>
</gene>
<reference key="1">
    <citation type="journal article" date="1997" name="Nature">
        <title>The complete genome sequence of the hyperthermophilic, sulphate-reducing archaeon Archaeoglobus fulgidus.</title>
        <authorList>
            <person name="Klenk H.-P."/>
            <person name="Clayton R.A."/>
            <person name="Tomb J.-F."/>
            <person name="White O."/>
            <person name="Nelson K.E."/>
            <person name="Ketchum K.A."/>
            <person name="Dodson R.J."/>
            <person name="Gwinn M.L."/>
            <person name="Hickey E.K."/>
            <person name="Peterson J.D."/>
            <person name="Richardson D.L."/>
            <person name="Kerlavage A.R."/>
            <person name="Graham D.E."/>
            <person name="Kyrpides N.C."/>
            <person name="Fleischmann R.D."/>
            <person name="Quackenbush J."/>
            <person name="Lee N.H."/>
            <person name="Sutton G.G."/>
            <person name="Gill S.R."/>
            <person name="Kirkness E.F."/>
            <person name="Dougherty B.A."/>
            <person name="McKenney K."/>
            <person name="Adams M.D."/>
            <person name="Loftus B.J."/>
            <person name="Peterson S.N."/>
            <person name="Reich C.I."/>
            <person name="McNeil L.K."/>
            <person name="Badger J.H."/>
            <person name="Glodek A."/>
            <person name="Zhou L."/>
            <person name="Overbeek R."/>
            <person name="Gocayne J.D."/>
            <person name="Weidman J.F."/>
            <person name="McDonald L.A."/>
            <person name="Utterback T.R."/>
            <person name="Cotton M.D."/>
            <person name="Spriggs T."/>
            <person name="Artiach P."/>
            <person name="Kaine B.P."/>
            <person name="Sykes S.M."/>
            <person name="Sadow P.W."/>
            <person name="D'Andrea K.P."/>
            <person name="Bowman C."/>
            <person name="Fujii C."/>
            <person name="Garland S.A."/>
            <person name="Mason T.M."/>
            <person name="Olsen G.J."/>
            <person name="Fraser C.M."/>
            <person name="Smith H.O."/>
            <person name="Woese C.R."/>
            <person name="Venter J.C."/>
        </authorList>
    </citation>
    <scope>NUCLEOTIDE SEQUENCE [LARGE SCALE GENOMIC DNA]</scope>
    <source>
        <strain>ATCC 49558 / DSM 4304 / JCM 9628 / NBRC 100126 / VC-16</strain>
    </source>
</reference>